<proteinExistence type="evidence at protein level"/>
<protein>
    <recommendedName>
        <fullName evidence="9">Large ribosomal subunit protein uL13</fullName>
    </recommendedName>
    <alternativeName>
        <fullName>50S ribosomal protein L13</fullName>
    </alternativeName>
</protein>
<keyword id="KW-0002">3D-structure</keyword>
<keyword id="KW-0903">Direct protein sequencing</keyword>
<keyword id="KW-1185">Reference proteome</keyword>
<keyword id="KW-0687">Ribonucleoprotein</keyword>
<keyword id="KW-0689">Ribosomal protein</keyword>
<keyword id="KW-0694">RNA-binding</keyword>
<keyword id="KW-0699">rRNA-binding</keyword>
<evidence type="ECO:0000250" key="1"/>
<evidence type="ECO:0000256" key="2">
    <source>
        <dbReference type="SAM" id="MobiDB-lite"/>
    </source>
</evidence>
<evidence type="ECO:0000269" key="3">
    <source>
    </source>
</evidence>
<evidence type="ECO:0000269" key="4">
    <source>
    </source>
</evidence>
<evidence type="ECO:0000269" key="5">
    <source>
    </source>
</evidence>
<evidence type="ECO:0000269" key="6">
    <source>
    </source>
</evidence>
<evidence type="ECO:0000269" key="7">
    <source>
    </source>
</evidence>
<evidence type="ECO:0000269" key="8">
    <source>
    </source>
</evidence>
<evidence type="ECO:0000305" key="9"/>
<evidence type="ECO:0007829" key="10">
    <source>
        <dbReference type="PDB" id="2ZJQ"/>
    </source>
</evidence>
<evidence type="ECO:0007829" key="11">
    <source>
        <dbReference type="PDB" id="2ZJR"/>
    </source>
</evidence>
<evidence type="ECO:0007829" key="12">
    <source>
        <dbReference type="PDB" id="4IOA"/>
    </source>
</evidence>
<evidence type="ECO:0007829" key="13">
    <source>
        <dbReference type="PDB" id="5DM6"/>
    </source>
</evidence>
<evidence type="ECO:0007829" key="14">
    <source>
        <dbReference type="PDB" id="7A0R"/>
    </source>
</evidence>
<evidence type="ECO:0007829" key="15">
    <source>
        <dbReference type="PDB" id="7A18"/>
    </source>
</evidence>
<accession>Q9RXY1</accession>
<sequence>MAFPDTDVSPPRGGPSSPAKSPLLRSFKVKTYIPKNDEQNWVVVDASGVPLGRLATLIASRIRGKHRPDFTPNMIQGDFVVVINAAQVALTGKKLDDKVYTRYTGYQGGLKTETAREALSKHPERVIEHAVFGMLPKGRQGRAMHTRLKVYAGETHPHSAQKPQVLKTQPLEVK</sequence>
<name>RL13_DEIRA</name>
<dbReference type="EMBL" id="AE000513">
    <property type="protein sequence ID" value="AAF09760.1"/>
    <property type="molecule type" value="Genomic_DNA"/>
</dbReference>
<dbReference type="PIR" id="E75552">
    <property type="entry name" value="E75552"/>
</dbReference>
<dbReference type="RefSeq" id="NP_293898.2">
    <property type="nucleotide sequence ID" value="NC_001263.1"/>
</dbReference>
<dbReference type="PDB" id="1NKW">
    <property type="method" value="X-ray"/>
    <property type="resolution" value="3.10 A"/>
    <property type="chains" value="H=1-174"/>
</dbReference>
<dbReference type="PDB" id="1NWX">
    <property type="method" value="X-ray"/>
    <property type="resolution" value="3.50 A"/>
    <property type="chains" value="H=1-174"/>
</dbReference>
<dbReference type="PDB" id="1NWY">
    <property type="method" value="X-ray"/>
    <property type="resolution" value="3.30 A"/>
    <property type="chains" value="H=1-174"/>
</dbReference>
<dbReference type="PDB" id="1SM1">
    <property type="method" value="X-ray"/>
    <property type="resolution" value="3.42 A"/>
    <property type="chains" value="H=1-174"/>
</dbReference>
<dbReference type="PDB" id="1XBP">
    <property type="method" value="X-ray"/>
    <property type="resolution" value="3.50 A"/>
    <property type="chains" value="H=1-174"/>
</dbReference>
<dbReference type="PDB" id="2ZJP">
    <property type="method" value="X-ray"/>
    <property type="resolution" value="3.70 A"/>
    <property type="chains" value="G=1-174"/>
</dbReference>
<dbReference type="PDB" id="2ZJQ">
    <property type="method" value="X-ray"/>
    <property type="resolution" value="3.30 A"/>
    <property type="chains" value="G=1-174"/>
</dbReference>
<dbReference type="PDB" id="2ZJR">
    <property type="method" value="X-ray"/>
    <property type="resolution" value="2.91 A"/>
    <property type="chains" value="G=1-174"/>
</dbReference>
<dbReference type="PDB" id="3CF5">
    <property type="method" value="X-ray"/>
    <property type="resolution" value="3.30 A"/>
    <property type="chains" value="G=1-174"/>
</dbReference>
<dbReference type="PDB" id="3DLL">
    <property type="method" value="X-ray"/>
    <property type="resolution" value="3.50 A"/>
    <property type="chains" value="G=1-174"/>
</dbReference>
<dbReference type="PDB" id="3PIO">
    <property type="method" value="X-ray"/>
    <property type="resolution" value="3.25 A"/>
    <property type="chains" value="G=1-174"/>
</dbReference>
<dbReference type="PDB" id="3PIP">
    <property type="method" value="X-ray"/>
    <property type="resolution" value="3.45 A"/>
    <property type="chains" value="G=1-174"/>
</dbReference>
<dbReference type="PDB" id="4IO9">
    <property type="method" value="X-ray"/>
    <property type="resolution" value="3.20 A"/>
    <property type="chains" value="G=1-174"/>
</dbReference>
<dbReference type="PDB" id="4IOA">
    <property type="method" value="X-ray"/>
    <property type="resolution" value="3.20 A"/>
    <property type="chains" value="G=1-174"/>
</dbReference>
<dbReference type="PDB" id="4IOC">
    <property type="method" value="X-ray"/>
    <property type="resolution" value="3.60 A"/>
    <property type="chains" value="G=1-174"/>
</dbReference>
<dbReference type="PDB" id="4U67">
    <property type="method" value="X-ray"/>
    <property type="resolution" value="3.65 A"/>
    <property type="chains" value="G=1-174"/>
</dbReference>
<dbReference type="PDB" id="4V49">
    <property type="method" value="X-ray"/>
    <property type="resolution" value="8.70 A"/>
    <property type="chains" value="H=29-171"/>
</dbReference>
<dbReference type="PDB" id="4V4A">
    <property type="method" value="X-ray"/>
    <property type="resolution" value="9.50 A"/>
    <property type="chains" value="H=29-171"/>
</dbReference>
<dbReference type="PDB" id="4V4G">
    <property type="method" value="X-ray"/>
    <property type="resolution" value="11.50 A"/>
    <property type="chains" value="K=29-171"/>
</dbReference>
<dbReference type="PDB" id="4WFN">
    <property type="method" value="X-ray"/>
    <property type="resolution" value="3.54 A"/>
    <property type="chains" value="G=1-174"/>
</dbReference>
<dbReference type="PDB" id="5DM6">
    <property type="method" value="X-ray"/>
    <property type="resolution" value="2.90 A"/>
    <property type="chains" value="G=30-171"/>
</dbReference>
<dbReference type="PDB" id="5DM7">
    <property type="method" value="X-ray"/>
    <property type="resolution" value="3.00 A"/>
    <property type="chains" value="G=30-171"/>
</dbReference>
<dbReference type="PDB" id="5JVG">
    <property type="method" value="X-ray"/>
    <property type="resolution" value="3.43 A"/>
    <property type="chains" value="G=1-174"/>
</dbReference>
<dbReference type="PDB" id="5JVH">
    <property type="method" value="X-ray"/>
    <property type="resolution" value="3.58 A"/>
    <property type="chains" value="G=1-174"/>
</dbReference>
<dbReference type="PDB" id="7A0R">
    <property type="method" value="X-ray"/>
    <property type="resolution" value="3.30 A"/>
    <property type="chains" value="G=30-172"/>
</dbReference>
<dbReference type="PDB" id="7A0S">
    <property type="method" value="X-ray"/>
    <property type="resolution" value="3.22 A"/>
    <property type="chains" value="G=30-172"/>
</dbReference>
<dbReference type="PDB" id="7A18">
    <property type="method" value="X-ray"/>
    <property type="resolution" value="3.40 A"/>
    <property type="chains" value="G=30-171"/>
</dbReference>
<dbReference type="PDBsum" id="1NKW"/>
<dbReference type="PDBsum" id="1NWX"/>
<dbReference type="PDBsum" id="1NWY"/>
<dbReference type="PDBsum" id="1SM1"/>
<dbReference type="PDBsum" id="1XBP"/>
<dbReference type="PDBsum" id="2ZJP"/>
<dbReference type="PDBsum" id="2ZJQ"/>
<dbReference type="PDBsum" id="2ZJR"/>
<dbReference type="PDBsum" id="3CF5"/>
<dbReference type="PDBsum" id="3DLL"/>
<dbReference type="PDBsum" id="3PIO"/>
<dbReference type="PDBsum" id="3PIP"/>
<dbReference type="PDBsum" id="4IO9"/>
<dbReference type="PDBsum" id="4IOA"/>
<dbReference type="PDBsum" id="4IOC"/>
<dbReference type="PDBsum" id="4U67"/>
<dbReference type="PDBsum" id="4V49"/>
<dbReference type="PDBsum" id="4V4A"/>
<dbReference type="PDBsum" id="4V4G"/>
<dbReference type="PDBsum" id="4WFN"/>
<dbReference type="PDBsum" id="5DM6"/>
<dbReference type="PDBsum" id="5DM7"/>
<dbReference type="PDBsum" id="5JVG"/>
<dbReference type="PDBsum" id="5JVH"/>
<dbReference type="PDBsum" id="7A0R"/>
<dbReference type="PDBsum" id="7A0S"/>
<dbReference type="PDBsum" id="7A18"/>
<dbReference type="SMR" id="Q9RXY1"/>
<dbReference type="FunCoup" id="Q9RXY1">
    <property type="interactions" value="496"/>
</dbReference>
<dbReference type="IntAct" id="Q9RXY1">
    <property type="interactions" value="1"/>
</dbReference>
<dbReference type="STRING" id="243230.DR_0174"/>
<dbReference type="PaxDb" id="243230-DR_0174"/>
<dbReference type="EnsemblBacteria" id="AAF09760">
    <property type="protein sequence ID" value="AAF09760"/>
    <property type="gene ID" value="DR_0174"/>
</dbReference>
<dbReference type="KEGG" id="dra:DR_0174"/>
<dbReference type="PATRIC" id="fig|243230.17.peg.338"/>
<dbReference type="eggNOG" id="COG0102">
    <property type="taxonomic scope" value="Bacteria"/>
</dbReference>
<dbReference type="HOGENOM" id="CLU_082184_2_2_0"/>
<dbReference type="InParanoid" id="Q9RXY1"/>
<dbReference type="OrthoDB" id="9801330at2"/>
<dbReference type="EvolutionaryTrace" id="Q9RXY1"/>
<dbReference type="Proteomes" id="UP000002524">
    <property type="component" value="Chromosome 1"/>
</dbReference>
<dbReference type="GO" id="GO:0022625">
    <property type="term" value="C:cytosolic large ribosomal subunit"/>
    <property type="evidence" value="ECO:0000318"/>
    <property type="project" value="GO_Central"/>
</dbReference>
<dbReference type="GO" id="GO:0005840">
    <property type="term" value="C:ribosome"/>
    <property type="evidence" value="ECO:0000318"/>
    <property type="project" value="GO_Central"/>
</dbReference>
<dbReference type="GO" id="GO:0003729">
    <property type="term" value="F:mRNA binding"/>
    <property type="evidence" value="ECO:0000318"/>
    <property type="project" value="GO_Central"/>
</dbReference>
<dbReference type="GO" id="GO:0019843">
    <property type="term" value="F:rRNA binding"/>
    <property type="evidence" value="ECO:0007669"/>
    <property type="project" value="UniProtKB-KW"/>
</dbReference>
<dbReference type="GO" id="GO:0003735">
    <property type="term" value="F:structural constituent of ribosome"/>
    <property type="evidence" value="ECO:0000318"/>
    <property type="project" value="GO_Central"/>
</dbReference>
<dbReference type="GO" id="GO:0017148">
    <property type="term" value="P:negative regulation of translation"/>
    <property type="evidence" value="ECO:0000318"/>
    <property type="project" value="GO_Central"/>
</dbReference>
<dbReference type="GO" id="GO:0006412">
    <property type="term" value="P:translation"/>
    <property type="evidence" value="ECO:0007669"/>
    <property type="project" value="UniProtKB-UniRule"/>
</dbReference>
<dbReference type="CDD" id="cd00392">
    <property type="entry name" value="Ribosomal_L13"/>
    <property type="match status" value="1"/>
</dbReference>
<dbReference type="FunFam" id="3.90.1180.10:FF:000001">
    <property type="entry name" value="50S ribosomal protein L13"/>
    <property type="match status" value="1"/>
</dbReference>
<dbReference type="Gene3D" id="3.90.1180.10">
    <property type="entry name" value="Ribosomal protein L13"/>
    <property type="match status" value="1"/>
</dbReference>
<dbReference type="HAMAP" id="MF_01366">
    <property type="entry name" value="Ribosomal_uL13"/>
    <property type="match status" value="1"/>
</dbReference>
<dbReference type="InterPro" id="IPR005822">
    <property type="entry name" value="Ribosomal_uL13"/>
</dbReference>
<dbReference type="InterPro" id="IPR005823">
    <property type="entry name" value="Ribosomal_uL13_bac-type"/>
</dbReference>
<dbReference type="InterPro" id="IPR023563">
    <property type="entry name" value="Ribosomal_uL13_CS"/>
</dbReference>
<dbReference type="InterPro" id="IPR036899">
    <property type="entry name" value="Ribosomal_uL13_sf"/>
</dbReference>
<dbReference type="NCBIfam" id="TIGR01066">
    <property type="entry name" value="rplM_bact"/>
    <property type="match status" value="1"/>
</dbReference>
<dbReference type="PANTHER" id="PTHR11545:SF2">
    <property type="entry name" value="LARGE RIBOSOMAL SUBUNIT PROTEIN UL13M"/>
    <property type="match status" value="1"/>
</dbReference>
<dbReference type="PANTHER" id="PTHR11545">
    <property type="entry name" value="RIBOSOMAL PROTEIN L13"/>
    <property type="match status" value="1"/>
</dbReference>
<dbReference type="Pfam" id="PF00572">
    <property type="entry name" value="Ribosomal_L13"/>
    <property type="match status" value="1"/>
</dbReference>
<dbReference type="PIRSF" id="PIRSF002181">
    <property type="entry name" value="Ribosomal_L13"/>
    <property type="match status" value="1"/>
</dbReference>
<dbReference type="SUPFAM" id="SSF52161">
    <property type="entry name" value="Ribosomal protein L13"/>
    <property type="match status" value="1"/>
</dbReference>
<dbReference type="PROSITE" id="PS00783">
    <property type="entry name" value="RIBOSOMAL_L13"/>
    <property type="match status" value="1"/>
</dbReference>
<gene>
    <name type="primary">rplM</name>
    <name type="ordered locus">DR_0174</name>
</gene>
<comment type="function">
    <text evidence="1">This protein is one of the early assembly proteins of the 50S ribosomal subunit (By similarity). Binds to the 23S rRNA.</text>
</comment>
<comment type="subunit">
    <text evidence="3 4 5 6 7 8">Part of the 50S ribosomal subunit. Contacts proteins L3 and L20.</text>
</comment>
<comment type="similarity">
    <text evidence="9">Belongs to the universal ribosomal protein uL13 family.</text>
</comment>
<organism>
    <name type="scientific">Deinococcus radiodurans (strain ATCC 13939 / DSM 20539 / JCM 16871 / CCUG 27074 / LMG 4051 / NBRC 15346 / NCIMB 9279 / VKM B-1422 / R1)</name>
    <dbReference type="NCBI Taxonomy" id="243230"/>
    <lineage>
        <taxon>Bacteria</taxon>
        <taxon>Thermotogati</taxon>
        <taxon>Deinococcota</taxon>
        <taxon>Deinococci</taxon>
        <taxon>Deinococcales</taxon>
        <taxon>Deinococcaceae</taxon>
        <taxon>Deinococcus</taxon>
    </lineage>
</organism>
<reference key="1">
    <citation type="journal article" date="1999" name="Science">
        <title>Genome sequence of the radioresistant bacterium Deinococcus radiodurans R1.</title>
        <authorList>
            <person name="White O."/>
            <person name="Eisen J.A."/>
            <person name="Heidelberg J.F."/>
            <person name="Hickey E.K."/>
            <person name="Peterson J.D."/>
            <person name="Dodson R.J."/>
            <person name="Haft D.H."/>
            <person name="Gwinn M.L."/>
            <person name="Nelson W.C."/>
            <person name="Richardson D.L."/>
            <person name="Moffat K.S."/>
            <person name="Qin H."/>
            <person name="Jiang L."/>
            <person name="Pamphile W."/>
            <person name="Crosby M."/>
            <person name="Shen M."/>
            <person name="Vamathevan J.J."/>
            <person name="Lam P."/>
            <person name="McDonald L.A."/>
            <person name="Utterback T.R."/>
            <person name="Zalewski C."/>
            <person name="Makarova K.S."/>
            <person name="Aravind L."/>
            <person name="Daly M.J."/>
            <person name="Minton K.W."/>
            <person name="Fleischmann R.D."/>
            <person name="Ketchum K.A."/>
            <person name="Nelson K.E."/>
            <person name="Salzberg S.L."/>
            <person name="Smith H.O."/>
            <person name="Venter J.C."/>
            <person name="Fraser C.M."/>
        </authorList>
    </citation>
    <scope>NUCLEOTIDE SEQUENCE [LARGE SCALE GENOMIC DNA]</scope>
    <source>
        <strain>ATCC 13939 / DSM 20539 / JCM 16871 / CCUG 27074 / LMG 4051 / NBRC 15346 / NCIMB 9279 / VKM B-1422 / R1</strain>
    </source>
</reference>
<reference key="2">
    <citation type="journal article" date="2001" name="Cell">
        <title>High resolution structure of the large ribosomal subunit from a mesophilic eubacterium.</title>
        <authorList>
            <person name="Harms J."/>
            <person name="Schluenzen F."/>
            <person name="Zarivach R."/>
            <person name="Bashan A."/>
            <person name="Gat S."/>
            <person name="Agmon I."/>
            <person name="Bartels H."/>
            <person name="Franceschi F."/>
            <person name="Yonath A."/>
        </authorList>
    </citation>
    <scope>X-RAY CRYSTALLOGRAPHY (3.1 ANGSTROMS) OF THE 50S SUBUNIT</scope>
    <scope>PROTEIN SEQUENCE OF 1-5</scope>
    <scope>CONTACTS WITH 23S RRNA</scope>
    <source>
        <strain>ATCC 13939 / DSM 20539 / JCM 16871 / CCUG 27074 / LMG 4051 / NBRC 15346 / NCIMB 9279 / VKM B-1422 / R1</strain>
    </source>
</reference>
<reference key="3">
    <citation type="journal article" date="2001" name="Nature">
        <title>Structural basis for the interaction of antibiotics with the peptidyl transferase centre in eubacteria.</title>
        <authorList>
            <person name="Schluenzen F."/>
            <person name="Zarivach R."/>
            <person name="Harms J."/>
            <person name="Bashan A."/>
            <person name="Tocilj A."/>
            <person name="Albrecht R."/>
            <person name="Yonath A."/>
            <person name="Franceschi F."/>
        </authorList>
    </citation>
    <scope>X-RAY CRYSTALLOGRAPHY (3.1 ANGSTROMS) OF THE 50S SUBUNIT IN COMPLEX WITH FIVE ANTIBIOTICS</scope>
    <source>
        <strain>ATCC 13939 / DSM 20539 / JCM 16871 / CCUG 27074 / LMG 4051 / NBRC 15346 / NCIMB 9279 / VKM B-1422 / R1</strain>
    </source>
</reference>
<reference key="4">
    <citation type="journal article" date="2003" name="Mol. Cell">
        <title>Structural basis of the ribosomal machinery for peptide bond formation, translocation, and nascent chain progression.</title>
        <authorList>
            <person name="Bashan A."/>
            <person name="Agmon I."/>
            <person name="Zarivach R."/>
            <person name="Schluenzen F."/>
            <person name="Harms J."/>
            <person name="Berisio R."/>
            <person name="Bartels H."/>
            <person name="Franceschi F."/>
            <person name="Auerbach T."/>
            <person name="Hansen H.A."/>
            <person name="Kossoy E."/>
            <person name="Kessler M."/>
            <person name="Yonath A."/>
        </authorList>
    </citation>
    <scope>X-RAY CRYSTALLOGRAPHY (3.5 ANGSTROMS) OF THE 50S SUBUNIT IN COMPLEX WITH TRNA MIMICS</scope>
    <source>
        <strain>ATCC 13939 / DSM 20539 / JCM 16871 / CCUG 27074 / LMG 4051 / NBRC 15346 / NCIMB 9279 / VKM B-1422 / R1</strain>
    </source>
</reference>
<reference key="5">
    <citation type="journal article" date="2003" name="Structure">
        <title>Structural basis for the antibiotic activity of ketolides and azalides.</title>
        <authorList>
            <person name="Schluenzen F."/>
            <person name="Harms J.M."/>
            <person name="Franceschi F."/>
            <person name="Hansen H.A."/>
            <person name="Bartels H."/>
            <person name="Zarivach R."/>
            <person name="Yonath A."/>
        </authorList>
    </citation>
    <scope>X-RAY CRYSTALLOGRAPHY (3.3 ANGSTROMS) OF THE 50S SUBUNIT IN COMPLEX WITH MODIFIED MACROLIDE ANTIBIOTICS</scope>
    <source>
        <strain>ATCC 13939 / DSM 20539 / JCM 16871 / CCUG 27074 / LMG 4051 / NBRC 15346 / NCIMB 9279 / VKM B-1422 / R1</strain>
    </source>
</reference>
<reference key="6">
    <citation type="journal article" date="2003" name="Nat. Struct. Biol.">
        <title>Structural insight into the role of the ribosomal tunnel in cellular regulation.</title>
        <authorList>
            <person name="Berisio R."/>
            <person name="Schluenzen F."/>
            <person name="Harms J."/>
            <person name="Bashan A."/>
            <person name="Auerbach T."/>
            <person name="Baram D."/>
            <person name="Yonath A."/>
        </authorList>
    </citation>
    <scope>X-RAY CRYSTALLOGRAPHY (3.4 ANGSTROMS) OF THE 50S SUBUNIT IN COMPLEX WITH TROLEANDOMYCIN</scope>
    <source>
        <strain>ATCC 13939 / DSM 20539 / JCM 16871 / CCUG 27074 / LMG 4051 / NBRC 15346 / NCIMB 9279 / VKM B-1422 / R1</strain>
    </source>
</reference>
<reference key="7">
    <citation type="journal article" date="2004" name="BMC Biol.">
        <title>Alterations at the peptidyl transferase centre of the ribosome induced by the synergistic action of the streptogramins dalfopristin and quinupristin.</title>
        <authorList>
            <person name="Harms J.M."/>
            <person name="Schluenzen F."/>
            <person name="Fucini P."/>
            <person name="Bartels H."/>
            <person name="Yonath A."/>
        </authorList>
    </citation>
    <scope>X-RAY CRYSTALLOGRAPHY (3.4 ANGSTROMS) OF THE 50S SUBUNIT IN COMPLEX WITH THE STREPTOGRAMINS QUINUPRISTIN AND DALFOPRISTIN</scope>
    <source>
        <strain>ATCC 13939 / DSM 20539 / JCM 16871 / CCUG 27074 / LMG 4051 / NBRC 15346 / NCIMB 9279 / VKM B-1422 / R1</strain>
    </source>
</reference>
<reference key="8">
    <citation type="journal article" date="2004" name="Mol. Microbiol.">
        <title>Inhibition of peptide bond formation by pleuromutilins: the structure of the 50S ribosomal subunit from Deinococcus radiodurans in complex with tiamulin.</title>
        <authorList>
            <person name="Schluenzen F."/>
            <person name="Pyetan E."/>
            <person name="Fucini P."/>
            <person name="Yonath A."/>
            <person name="Harms J.M."/>
        </authorList>
    </citation>
    <scope>X-RAY CRYSTALLOGRAPHY (3.5 ANGSTROMS) OF THE 50S SUBUNIT IN COMPLEX WITH TIAMULIN</scope>
    <source>
        <strain>ATCC 13939 / DSM 20539 / JCM 16871 / CCUG 27074 / LMG 4051 / NBRC 15346 / NCIMB 9279 / VKM B-1422 / R1</strain>
    </source>
</reference>
<feature type="chain" id="PRO_0000133733" description="Large ribosomal subunit protein uL13">
    <location>
        <begin position="1"/>
        <end position="174"/>
    </location>
</feature>
<feature type="region of interest" description="Disordered" evidence="2">
    <location>
        <begin position="1"/>
        <end position="22"/>
    </location>
</feature>
<feature type="region of interest" description="Disordered" evidence="2">
    <location>
        <begin position="153"/>
        <end position="174"/>
    </location>
</feature>
<feature type="strand" evidence="13">
    <location>
        <begin position="41"/>
        <end position="45"/>
    </location>
</feature>
<feature type="strand" evidence="10">
    <location>
        <begin position="47"/>
        <end position="50"/>
    </location>
</feature>
<feature type="helix" evidence="13">
    <location>
        <begin position="51"/>
        <end position="63"/>
    </location>
</feature>
<feature type="turn" evidence="15">
    <location>
        <begin position="64"/>
        <end position="66"/>
    </location>
</feature>
<feature type="strand" evidence="11">
    <location>
        <begin position="72"/>
        <end position="74"/>
    </location>
</feature>
<feature type="strand" evidence="13">
    <location>
        <begin position="79"/>
        <end position="83"/>
    </location>
</feature>
<feature type="helix" evidence="13">
    <location>
        <begin position="85"/>
        <end position="87"/>
    </location>
</feature>
<feature type="turn" evidence="14">
    <location>
        <begin position="91"/>
        <end position="93"/>
    </location>
</feature>
<feature type="helix" evidence="13">
    <location>
        <begin position="94"/>
        <end position="97"/>
    </location>
</feature>
<feature type="strand" evidence="13">
    <location>
        <begin position="99"/>
        <end position="102"/>
    </location>
</feature>
<feature type="strand" evidence="14">
    <location>
        <begin position="107"/>
        <end position="109"/>
    </location>
</feature>
<feature type="strand" evidence="13">
    <location>
        <begin position="111"/>
        <end position="114"/>
    </location>
</feature>
<feature type="helix" evidence="13">
    <location>
        <begin position="115"/>
        <end position="121"/>
    </location>
</feature>
<feature type="helix" evidence="13">
    <location>
        <begin position="124"/>
        <end position="133"/>
    </location>
</feature>
<feature type="helix" evidence="13">
    <location>
        <begin position="139"/>
        <end position="145"/>
    </location>
</feature>
<feature type="strand" evidence="13">
    <location>
        <begin position="148"/>
        <end position="150"/>
    </location>
</feature>
<feature type="strand" evidence="12">
    <location>
        <begin position="154"/>
        <end position="156"/>
    </location>
</feature>
<feature type="helix" evidence="13">
    <location>
        <begin position="159"/>
        <end position="161"/>
    </location>
</feature>
<feature type="strand" evidence="15">
    <location>
        <begin position="164"/>
        <end position="166"/>
    </location>
</feature>